<dbReference type="EMBL" id="X58141">
    <property type="protein sequence ID" value="CAA41149.1"/>
    <property type="molecule type" value="mRNA"/>
</dbReference>
<dbReference type="EMBL" id="L07261">
    <property type="status" value="NOT_ANNOTATED_CDS"/>
    <property type="molecule type" value="mRNA"/>
</dbReference>
<dbReference type="EMBL" id="L29296">
    <property type="protein sequence ID" value="AAB05645.1"/>
    <property type="molecule type" value="Genomic_DNA"/>
</dbReference>
<dbReference type="EMBL" id="L29286">
    <property type="protein sequence ID" value="AAB05645.1"/>
    <property type="status" value="JOINED"/>
    <property type="molecule type" value="Genomic_DNA"/>
</dbReference>
<dbReference type="EMBL" id="L29287">
    <property type="protein sequence ID" value="AAB05645.1"/>
    <property type="status" value="JOINED"/>
    <property type="molecule type" value="Genomic_DNA"/>
</dbReference>
<dbReference type="EMBL" id="L29289">
    <property type="protein sequence ID" value="AAB05645.1"/>
    <property type="status" value="JOINED"/>
    <property type="molecule type" value="Genomic_DNA"/>
</dbReference>
<dbReference type="EMBL" id="L29290">
    <property type="protein sequence ID" value="AAB05645.1"/>
    <property type="status" value="JOINED"/>
    <property type="molecule type" value="Genomic_DNA"/>
</dbReference>
<dbReference type="EMBL" id="L29291">
    <property type="protein sequence ID" value="AAB05645.1"/>
    <property type="status" value="JOINED"/>
    <property type="molecule type" value="Genomic_DNA"/>
</dbReference>
<dbReference type="EMBL" id="L29292">
    <property type="protein sequence ID" value="AAB05645.1"/>
    <property type="status" value="JOINED"/>
    <property type="molecule type" value="Genomic_DNA"/>
</dbReference>
<dbReference type="EMBL" id="L29293">
    <property type="protein sequence ID" value="AAB05645.1"/>
    <property type="status" value="JOINED"/>
    <property type="molecule type" value="Genomic_DNA"/>
</dbReference>
<dbReference type="EMBL" id="L29294">
    <property type="protein sequence ID" value="AAB05645.1"/>
    <property type="status" value="JOINED"/>
    <property type="molecule type" value="Genomic_DNA"/>
</dbReference>
<dbReference type="EMBL" id="L29295">
    <property type="protein sequence ID" value="AAB05645.1"/>
    <property type="status" value="JOINED"/>
    <property type="molecule type" value="Genomic_DNA"/>
</dbReference>
<dbReference type="EMBL" id="L29297">
    <property type="protein sequence ID" value="AAB05645.1"/>
    <property type="status" value="JOINED"/>
    <property type="molecule type" value="Genomic_DNA"/>
</dbReference>
<dbReference type="EMBL" id="L29298">
    <property type="protein sequence ID" value="AAB05645.1"/>
    <property type="status" value="JOINED"/>
    <property type="molecule type" value="Genomic_DNA"/>
</dbReference>
<dbReference type="EMBL" id="AK295457">
    <property type="protein sequence ID" value="BAG58391.1"/>
    <property type="molecule type" value="mRNA"/>
</dbReference>
<dbReference type="EMBL" id="Z74617">
    <property type="protein sequence ID" value="CAA98970.1"/>
    <property type="status" value="ALT_SEQ"/>
    <property type="molecule type" value="Genomic_DNA"/>
</dbReference>
<dbReference type="EMBL" id="Z68280">
    <property type="status" value="NOT_ANNOTATED_CDS"/>
    <property type="molecule type" value="Genomic_DNA"/>
</dbReference>
<dbReference type="EMBL" id="AL390065">
    <property type="protein sequence ID" value="CAM21299.1"/>
    <property type="molecule type" value="Genomic_DNA"/>
</dbReference>
<dbReference type="EMBL" id="AL121750">
    <property type="protein sequence ID" value="CAM21299.1"/>
    <property type="status" value="JOINED"/>
    <property type="molecule type" value="Genomic_DNA"/>
</dbReference>
<dbReference type="EMBL" id="BX465861">
    <property type="protein sequence ID" value="CAM21299.1"/>
    <property type="status" value="JOINED"/>
    <property type="molecule type" value="Genomic_DNA"/>
</dbReference>
<dbReference type="EMBL" id="BX465861">
    <property type="protein sequence ID" value="CAM25274.1"/>
    <property type="molecule type" value="Genomic_DNA"/>
</dbReference>
<dbReference type="EMBL" id="AL121750">
    <property type="protein sequence ID" value="CAM25274.1"/>
    <property type="status" value="JOINED"/>
    <property type="molecule type" value="Genomic_DNA"/>
</dbReference>
<dbReference type="EMBL" id="AL390065">
    <property type="protein sequence ID" value="CAM25274.1"/>
    <property type="status" value="JOINED"/>
    <property type="molecule type" value="Genomic_DNA"/>
</dbReference>
<dbReference type="EMBL" id="AL121750">
    <property type="protein sequence ID" value="CAM28230.1"/>
    <property type="molecule type" value="Genomic_DNA"/>
</dbReference>
<dbReference type="EMBL" id="AL390065">
    <property type="protein sequence ID" value="CAM28230.1"/>
    <property type="status" value="JOINED"/>
    <property type="molecule type" value="Genomic_DNA"/>
</dbReference>
<dbReference type="EMBL" id="BX465861">
    <property type="protein sequence ID" value="CAM28230.1"/>
    <property type="status" value="JOINED"/>
    <property type="molecule type" value="Genomic_DNA"/>
</dbReference>
<dbReference type="EMBL" id="AL121750">
    <property type="protein sequence ID" value="CAM28231.1"/>
    <property type="molecule type" value="Genomic_DNA"/>
</dbReference>
<dbReference type="EMBL" id="AL390065">
    <property type="protein sequence ID" value="CAM28231.1"/>
    <property type="status" value="JOINED"/>
    <property type="molecule type" value="Genomic_DNA"/>
</dbReference>
<dbReference type="EMBL" id="BX465861">
    <property type="protein sequence ID" value="CAM28231.1"/>
    <property type="status" value="JOINED"/>
    <property type="molecule type" value="Genomic_DNA"/>
</dbReference>
<dbReference type="EMBL" id="AL121750">
    <property type="protein sequence ID" value="CAM28232.1"/>
    <property type="molecule type" value="Genomic_DNA"/>
</dbReference>
<dbReference type="EMBL" id="AL390065">
    <property type="protein sequence ID" value="CAM28232.1"/>
    <property type="status" value="JOINED"/>
    <property type="molecule type" value="Genomic_DNA"/>
</dbReference>
<dbReference type="EMBL" id="BX465861">
    <property type="protein sequence ID" value="CAM28232.1"/>
    <property type="status" value="JOINED"/>
    <property type="molecule type" value="Genomic_DNA"/>
</dbReference>
<dbReference type="EMBL" id="CH471131">
    <property type="protein sequence ID" value="EAW82498.1"/>
    <property type="molecule type" value="Genomic_DNA"/>
</dbReference>
<dbReference type="EMBL" id="CH471131">
    <property type="protein sequence ID" value="EAW82499.1"/>
    <property type="molecule type" value="Genomic_DNA"/>
</dbReference>
<dbReference type="EMBL" id="CH471131">
    <property type="protein sequence ID" value="EAW82501.1"/>
    <property type="molecule type" value="Genomic_DNA"/>
</dbReference>
<dbReference type="EMBL" id="CH471131">
    <property type="protein sequence ID" value="EAW82502.1"/>
    <property type="molecule type" value="Genomic_DNA"/>
</dbReference>
<dbReference type="EMBL" id="CH471131">
    <property type="protein sequence ID" value="EAW82503.1"/>
    <property type="molecule type" value="Genomic_DNA"/>
</dbReference>
<dbReference type="EMBL" id="CH471131">
    <property type="protein sequence ID" value="EAW82504.1"/>
    <property type="molecule type" value="Genomic_DNA"/>
</dbReference>
<dbReference type="EMBL" id="CH471131">
    <property type="protein sequence ID" value="EAW82505.1"/>
    <property type="molecule type" value="Genomic_DNA"/>
</dbReference>
<dbReference type="EMBL" id="BC042998">
    <property type="protein sequence ID" value="AAH42998.1"/>
    <property type="molecule type" value="mRNA"/>
</dbReference>
<dbReference type="EMBL" id="AH004561">
    <property type="protein sequence ID" value="AAB30914.2"/>
    <property type="molecule type" value="mRNA"/>
</dbReference>
<dbReference type="CCDS" id="CCDS3363.1">
    <molecule id="P35611-3"/>
</dbReference>
<dbReference type="CCDS" id="CCDS3364.1">
    <molecule id="P35611-6"/>
</dbReference>
<dbReference type="CCDS" id="CCDS43205.1">
    <molecule id="P35611-1"/>
</dbReference>
<dbReference type="CCDS" id="CCDS75094.1">
    <molecule id="P35611-4"/>
</dbReference>
<dbReference type="CCDS" id="CCDS93468.1">
    <molecule id="P35611-2"/>
</dbReference>
<dbReference type="PIR" id="S18207">
    <property type="entry name" value="S18207"/>
</dbReference>
<dbReference type="RefSeq" id="NP_001110.2">
    <molecule id="P35611-1"/>
    <property type="nucleotide sequence ID" value="NM_001119.4"/>
</dbReference>
<dbReference type="RefSeq" id="NP_001273574.1">
    <molecule id="P35611-4"/>
    <property type="nucleotide sequence ID" value="NM_001286645.2"/>
</dbReference>
<dbReference type="RefSeq" id="NP_001341683.1">
    <molecule id="P35611-1"/>
    <property type="nucleotide sequence ID" value="NM_001354754.2"/>
</dbReference>
<dbReference type="RefSeq" id="NP_001341684.1">
    <molecule id="P35611-1"/>
    <property type="nucleotide sequence ID" value="NM_001354755.2"/>
</dbReference>
<dbReference type="RefSeq" id="NP_001341686.1">
    <molecule id="P35611-2"/>
    <property type="nucleotide sequence ID" value="NM_001354757.2"/>
</dbReference>
<dbReference type="RefSeq" id="NP_001341687.1">
    <molecule id="P35611-2"/>
    <property type="nucleotide sequence ID" value="NM_001354758.2"/>
</dbReference>
<dbReference type="RefSeq" id="NP_001341688.1">
    <molecule id="P35611-4"/>
    <property type="nucleotide sequence ID" value="NM_001354759.2"/>
</dbReference>
<dbReference type="RefSeq" id="NP_054908.2">
    <molecule id="P35611-3"/>
    <property type="nucleotide sequence ID" value="NM_014189.3"/>
</dbReference>
<dbReference type="RefSeq" id="NP_054909.2">
    <molecule id="P35611-2"/>
    <property type="nucleotide sequence ID" value="NM_014190.3"/>
</dbReference>
<dbReference type="RefSeq" id="NP_789771.1">
    <molecule id="P35611-6"/>
    <property type="nucleotide sequence ID" value="NM_176801.3"/>
</dbReference>
<dbReference type="RefSeq" id="XP_005247994.1">
    <property type="nucleotide sequence ID" value="XM_005247937.2"/>
</dbReference>
<dbReference type="RefSeq" id="XP_016863193.1">
    <molecule id="P35611-3"/>
    <property type="nucleotide sequence ID" value="XM_017007704.2"/>
</dbReference>
<dbReference type="RefSeq" id="XP_016863195.1">
    <molecule id="P35611-1"/>
    <property type="nucleotide sequence ID" value="XM_017007706.3"/>
</dbReference>
<dbReference type="RefSeq" id="XP_016863196.1">
    <property type="nucleotide sequence ID" value="XM_017007707.1"/>
</dbReference>
<dbReference type="RefSeq" id="XP_016863197.1">
    <property type="nucleotide sequence ID" value="XM_017007708.1"/>
</dbReference>
<dbReference type="RefSeq" id="XP_016863198.1">
    <molecule id="P35611-2"/>
    <property type="nucleotide sequence ID" value="XM_017007709.3"/>
</dbReference>
<dbReference type="RefSeq" id="XP_016863199.1">
    <property type="nucleotide sequence ID" value="XM_017007710.1"/>
</dbReference>
<dbReference type="RefSeq" id="XP_024309655.1">
    <molecule id="P35611-6"/>
    <property type="nucleotide sequence ID" value="XM_024453887.2"/>
</dbReference>
<dbReference type="RefSeq" id="XP_054204844.1">
    <molecule id="P35611-3"/>
    <property type="nucleotide sequence ID" value="XM_054348869.1"/>
</dbReference>
<dbReference type="RefSeq" id="XP_054204847.1">
    <molecule id="P35611-1"/>
    <property type="nucleotide sequence ID" value="XM_054348872.1"/>
</dbReference>
<dbReference type="RefSeq" id="XP_054204848.1">
    <molecule id="P35611-6"/>
    <property type="nucleotide sequence ID" value="XM_054348873.1"/>
</dbReference>
<dbReference type="RefSeq" id="XP_054204849.1">
    <molecule id="P35611-2"/>
    <property type="nucleotide sequence ID" value="XM_054348874.1"/>
</dbReference>
<dbReference type="SMR" id="P35611"/>
<dbReference type="BioGRID" id="106631">
    <property type="interactions" value="169"/>
</dbReference>
<dbReference type="ComplexPortal" id="CPX-2638">
    <property type="entry name" value="Adducin complex, alpha-beta variant"/>
</dbReference>
<dbReference type="ComplexPortal" id="CPX-2643">
    <property type="entry name" value="Adducin complex, alpha-gamma variant"/>
</dbReference>
<dbReference type="FunCoup" id="P35611">
    <property type="interactions" value="2715"/>
</dbReference>
<dbReference type="IntAct" id="P35611">
    <property type="interactions" value="82"/>
</dbReference>
<dbReference type="MINT" id="P35611"/>
<dbReference type="STRING" id="9606.ENSP00000264758"/>
<dbReference type="GlyCosmos" id="P35611">
    <property type="glycosylation" value="7 sites, 2 glycans"/>
</dbReference>
<dbReference type="GlyGen" id="P35611">
    <property type="glycosylation" value="10 sites, 2 O-linked glycans (8 sites)"/>
</dbReference>
<dbReference type="iPTMnet" id="P35611"/>
<dbReference type="MetOSite" id="P35611"/>
<dbReference type="PhosphoSitePlus" id="P35611"/>
<dbReference type="SwissPalm" id="P35611"/>
<dbReference type="BioMuta" id="ADD1"/>
<dbReference type="DMDM" id="12644231"/>
<dbReference type="jPOST" id="P35611"/>
<dbReference type="MassIVE" id="P35611"/>
<dbReference type="PaxDb" id="9606-ENSP00000264758"/>
<dbReference type="PeptideAtlas" id="P35611"/>
<dbReference type="ProteomicsDB" id="289"/>
<dbReference type="ProteomicsDB" id="55102">
    <molecule id="P35611-1"/>
</dbReference>
<dbReference type="ProteomicsDB" id="55103">
    <molecule id="P35611-2"/>
</dbReference>
<dbReference type="ProteomicsDB" id="55104">
    <molecule id="P35611-3"/>
</dbReference>
<dbReference type="ProteomicsDB" id="70300"/>
<dbReference type="Pumba" id="P35611"/>
<dbReference type="Antibodypedia" id="4065">
    <property type="antibodies" value="747 antibodies from 41 providers"/>
</dbReference>
<dbReference type="DNASU" id="118"/>
<dbReference type="Ensembl" id="ENST00000264758.11">
    <molecule id="P35611-3"/>
    <property type="protein sequence ID" value="ENSP00000264758.6"/>
    <property type="gene ID" value="ENSG00000087274.19"/>
</dbReference>
<dbReference type="Ensembl" id="ENST00000355842.7">
    <molecule id="P35611-4"/>
    <property type="protein sequence ID" value="ENSP00000348100.3"/>
    <property type="gene ID" value="ENSG00000087274.19"/>
</dbReference>
<dbReference type="Ensembl" id="ENST00000398123.6">
    <molecule id="P35611-6"/>
    <property type="protein sequence ID" value="ENSP00000381191.2"/>
    <property type="gene ID" value="ENSG00000087274.19"/>
</dbReference>
<dbReference type="Ensembl" id="ENST00000398125.5">
    <molecule id="P35611-6"/>
    <property type="protein sequence ID" value="ENSP00000381193.1"/>
    <property type="gene ID" value="ENSG00000087274.19"/>
</dbReference>
<dbReference type="Ensembl" id="ENST00000398129.5">
    <molecule id="P35611-1"/>
    <property type="protein sequence ID" value="ENSP00000381197.1"/>
    <property type="gene ID" value="ENSG00000087274.19"/>
</dbReference>
<dbReference type="Ensembl" id="ENST00000651918.1">
    <molecule id="P35611-2"/>
    <property type="protein sequence ID" value="ENSP00000498269.1"/>
    <property type="gene ID" value="ENSG00000087274.19"/>
</dbReference>
<dbReference type="GeneID" id="118"/>
<dbReference type="KEGG" id="hsa:118"/>
<dbReference type="UCSC" id="uc003gfo.4">
    <molecule id="P35611-1"/>
    <property type="organism name" value="human"/>
</dbReference>
<dbReference type="AGR" id="HGNC:243"/>
<dbReference type="CTD" id="118"/>
<dbReference type="DisGeNET" id="118"/>
<dbReference type="GeneCards" id="ADD1"/>
<dbReference type="HGNC" id="HGNC:243">
    <property type="gene designation" value="ADD1"/>
</dbReference>
<dbReference type="HPA" id="ENSG00000087274">
    <property type="expression patterns" value="Low tissue specificity"/>
</dbReference>
<dbReference type="MalaCards" id="ADD1"/>
<dbReference type="MIM" id="102680">
    <property type="type" value="gene"/>
</dbReference>
<dbReference type="neXtProt" id="NX_P35611"/>
<dbReference type="OpenTargets" id="ENSG00000087274"/>
<dbReference type="PharmGKB" id="PA31"/>
<dbReference type="VEuPathDB" id="HostDB:ENSG00000087274"/>
<dbReference type="eggNOG" id="KOG3699">
    <property type="taxonomic scope" value="Eukaryota"/>
</dbReference>
<dbReference type="GeneTree" id="ENSGT00940000158581"/>
<dbReference type="InParanoid" id="P35611"/>
<dbReference type="OrthoDB" id="3238794at2759"/>
<dbReference type="PAN-GO" id="P35611">
    <property type="GO annotations" value="8 GO annotations based on evolutionary models"/>
</dbReference>
<dbReference type="PhylomeDB" id="P35611"/>
<dbReference type="TreeFam" id="TF313003"/>
<dbReference type="PathwayCommons" id="P35611"/>
<dbReference type="Reactome" id="R-HSA-264870">
    <property type="pathway name" value="Caspase-mediated cleavage of cytoskeletal proteins"/>
</dbReference>
<dbReference type="Reactome" id="R-HSA-381038">
    <property type="pathway name" value="XBP1(S) activates chaperone genes"/>
</dbReference>
<dbReference type="Reactome" id="R-HSA-5223345">
    <property type="pathway name" value="Miscellaneous transport and binding events"/>
</dbReference>
<dbReference type="SignaLink" id="P35611"/>
<dbReference type="SIGNOR" id="P35611"/>
<dbReference type="BioGRID-ORCS" id="118">
    <property type="hits" value="15 hits in 1156 CRISPR screens"/>
</dbReference>
<dbReference type="CD-CODE" id="DEE660B4">
    <property type="entry name" value="Stress granule"/>
</dbReference>
<dbReference type="CD-CODE" id="FB4E32DD">
    <property type="entry name" value="Presynaptic clusters and postsynaptic densities"/>
</dbReference>
<dbReference type="ChiTaRS" id="ADD1">
    <property type="organism name" value="human"/>
</dbReference>
<dbReference type="GeneWiki" id="ADD1"/>
<dbReference type="GenomeRNAi" id="118"/>
<dbReference type="Pharos" id="P35611">
    <property type="development level" value="Tbio"/>
</dbReference>
<dbReference type="PRO" id="PR:P35611"/>
<dbReference type="Proteomes" id="UP000005640">
    <property type="component" value="Chromosome 4"/>
</dbReference>
<dbReference type="RNAct" id="P35611">
    <property type="molecule type" value="protein"/>
</dbReference>
<dbReference type="Bgee" id="ENSG00000087274">
    <property type="expression patterns" value="Expressed in right hemisphere of cerebellum and 208 other cell types or tissues"/>
</dbReference>
<dbReference type="ExpressionAtlas" id="P35611">
    <property type="expression patterns" value="baseline and differential"/>
</dbReference>
<dbReference type="GO" id="GO:0005912">
    <property type="term" value="C:adherens junction"/>
    <property type="evidence" value="ECO:0000314"/>
    <property type="project" value="CAFA"/>
</dbReference>
<dbReference type="GO" id="GO:0005737">
    <property type="term" value="C:cytoplasm"/>
    <property type="evidence" value="ECO:0000314"/>
    <property type="project" value="CAFA"/>
</dbReference>
<dbReference type="GO" id="GO:0005856">
    <property type="term" value="C:cytoskeleton"/>
    <property type="evidence" value="ECO:0000318"/>
    <property type="project" value="GO_Central"/>
</dbReference>
<dbReference type="GO" id="GO:0005829">
    <property type="term" value="C:cytosol"/>
    <property type="evidence" value="ECO:0000304"/>
    <property type="project" value="Reactome"/>
</dbReference>
<dbReference type="GO" id="GO:0008290">
    <property type="term" value="C:F-actin capping protein complex"/>
    <property type="evidence" value="ECO:0000314"/>
    <property type="project" value="BHF-UCL"/>
</dbReference>
<dbReference type="GO" id="GO:0005925">
    <property type="term" value="C:focal adhesion"/>
    <property type="evidence" value="ECO:0007005"/>
    <property type="project" value="UniProtKB"/>
</dbReference>
<dbReference type="GO" id="GO:0016604">
    <property type="term" value="C:nuclear body"/>
    <property type="evidence" value="ECO:0000314"/>
    <property type="project" value="HPA"/>
</dbReference>
<dbReference type="GO" id="GO:0005654">
    <property type="term" value="C:nucleoplasm"/>
    <property type="evidence" value="ECO:0000314"/>
    <property type="project" value="HPA"/>
</dbReference>
<dbReference type="GO" id="GO:0005634">
    <property type="term" value="C:nucleus"/>
    <property type="evidence" value="ECO:0000314"/>
    <property type="project" value="BHF-UCL"/>
</dbReference>
<dbReference type="GO" id="GO:0005886">
    <property type="term" value="C:plasma membrane"/>
    <property type="evidence" value="ECO:0000314"/>
    <property type="project" value="HPA"/>
</dbReference>
<dbReference type="GO" id="GO:0014069">
    <property type="term" value="C:postsynaptic density"/>
    <property type="evidence" value="ECO:0000318"/>
    <property type="project" value="GO_Central"/>
</dbReference>
<dbReference type="GO" id="GO:0003779">
    <property type="term" value="F:actin binding"/>
    <property type="evidence" value="ECO:0000304"/>
    <property type="project" value="ProtInc"/>
</dbReference>
<dbReference type="GO" id="GO:0051015">
    <property type="term" value="F:actin filament binding"/>
    <property type="evidence" value="ECO:0000314"/>
    <property type="project" value="BHF-UCL"/>
</dbReference>
<dbReference type="GO" id="GO:0045296">
    <property type="term" value="F:cadherin binding"/>
    <property type="evidence" value="ECO:0007005"/>
    <property type="project" value="BHF-UCL"/>
</dbReference>
<dbReference type="GO" id="GO:0005516">
    <property type="term" value="F:calmodulin binding"/>
    <property type="evidence" value="ECO:0007669"/>
    <property type="project" value="UniProtKB-KW"/>
</dbReference>
<dbReference type="GO" id="GO:0046983">
    <property type="term" value="F:protein dimerization activity"/>
    <property type="evidence" value="ECO:0000353"/>
    <property type="project" value="DisProt"/>
</dbReference>
<dbReference type="GO" id="GO:0046982">
    <property type="term" value="F:protein heterodimerization activity"/>
    <property type="evidence" value="ECO:0000353"/>
    <property type="project" value="BHF-UCL"/>
</dbReference>
<dbReference type="GO" id="GO:0042803">
    <property type="term" value="F:protein homodimerization activity"/>
    <property type="evidence" value="ECO:0000353"/>
    <property type="project" value="BHF-UCL"/>
</dbReference>
<dbReference type="GO" id="GO:0003723">
    <property type="term" value="F:RNA binding"/>
    <property type="evidence" value="ECO:0007005"/>
    <property type="project" value="UniProtKB"/>
</dbReference>
<dbReference type="GO" id="GO:0061629">
    <property type="term" value="F:RNA polymerase II-specific DNA-binding transcription factor binding"/>
    <property type="evidence" value="ECO:0000353"/>
    <property type="project" value="BHF-UCL"/>
</dbReference>
<dbReference type="GO" id="GO:0030507">
    <property type="term" value="F:spectrin binding"/>
    <property type="evidence" value="ECO:0000314"/>
    <property type="project" value="BHF-UCL"/>
</dbReference>
<dbReference type="GO" id="GO:0030036">
    <property type="term" value="P:actin cytoskeleton organization"/>
    <property type="evidence" value="ECO:0000305"/>
    <property type="project" value="BHF-UCL"/>
</dbReference>
<dbReference type="GO" id="GO:0051017">
    <property type="term" value="P:actin filament bundle assembly"/>
    <property type="evidence" value="ECO:0000314"/>
    <property type="project" value="BHF-UCL"/>
</dbReference>
<dbReference type="GO" id="GO:0051016">
    <property type="term" value="P:barbed-end actin filament capping"/>
    <property type="evidence" value="ECO:0000314"/>
    <property type="project" value="BHF-UCL"/>
</dbReference>
<dbReference type="GO" id="GO:0071277">
    <property type="term" value="P:cellular response to calcium ion"/>
    <property type="evidence" value="ECO:0000314"/>
    <property type="project" value="CAFA"/>
</dbReference>
<dbReference type="GO" id="GO:1903393">
    <property type="term" value="P:positive regulation of adherens junction organization"/>
    <property type="evidence" value="ECO:0000314"/>
    <property type="project" value="CAFA"/>
</dbReference>
<dbReference type="GO" id="GO:1903142">
    <property type="term" value="P:positive regulation of establishment of endothelial barrier"/>
    <property type="evidence" value="ECO:0000314"/>
    <property type="project" value="CAFA"/>
</dbReference>
<dbReference type="GO" id="GO:0032092">
    <property type="term" value="P:positive regulation of protein binding"/>
    <property type="evidence" value="ECO:0000314"/>
    <property type="project" value="BHF-UCL"/>
</dbReference>
<dbReference type="CDD" id="cd00398">
    <property type="entry name" value="Aldolase_II"/>
    <property type="match status" value="1"/>
</dbReference>
<dbReference type="DisProt" id="DP00240"/>
<dbReference type="FunFam" id="3.40.225.10:FF:000002">
    <property type="entry name" value="alpha-adducin isoform X2"/>
    <property type="match status" value="1"/>
</dbReference>
<dbReference type="Gene3D" id="3.40.225.10">
    <property type="entry name" value="Class II aldolase/adducin N-terminal domain"/>
    <property type="match status" value="1"/>
</dbReference>
<dbReference type="InterPro" id="IPR051017">
    <property type="entry name" value="Aldolase-II_Adducin_sf"/>
</dbReference>
<dbReference type="InterPro" id="IPR001303">
    <property type="entry name" value="Aldolase_II/adducin_N"/>
</dbReference>
<dbReference type="InterPro" id="IPR036409">
    <property type="entry name" value="Aldolase_II/adducin_N_sf"/>
</dbReference>
<dbReference type="NCBIfam" id="NF005451">
    <property type="entry name" value="PRK07044.1"/>
    <property type="match status" value="1"/>
</dbReference>
<dbReference type="PANTHER" id="PTHR10672">
    <property type="entry name" value="ADDUCIN"/>
    <property type="match status" value="1"/>
</dbReference>
<dbReference type="PANTHER" id="PTHR10672:SF4">
    <property type="entry name" value="ALPHA-ADDUCIN"/>
    <property type="match status" value="1"/>
</dbReference>
<dbReference type="Pfam" id="PF00596">
    <property type="entry name" value="Aldolase_II"/>
    <property type="match status" value="1"/>
</dbReference>
<dbReference type="SMART" id="SM01007">
    <property type="entry name" value="Aldolase_II"/>
    <property type="match status" value="1"/>
</dbReference>
<dbReference type="SUPFAM" id="SSF53639">
    <property type="entry name" value="AraD/HMP-PK domain-like"/>
    <property type="match status" value="1"/>
</dbReference>
<proteinExistence type="evidence at protein level"/>
<gene>
    <name type="primary">ADD1</name>
    <name type="synonym">ADDA</name>
</gene>
<protein>
    <recommendedName>
        <fullName>Alpha-adducin</fullName>
    </recommendedName>
    <alternativeName>
        <fullName>Erythrocyte adducin subunit alpha</fullName>
    </alternativeName>
</protein>
<comment type="function">
    <text>Membrane-cytoskeleton-associated protein that promotes the assembly of the spectrin-actin network. Binds to calmodulin.</text>
</comment>
<comment type="subunit">
    <text>Heterodimer of an alpha and a beta subunit or an alpha and a gamma subunit.</text>
</comment>
<comment type="interaction">
    <interactant intactId="EBI-2809187">
        <id>P35611</id>
    </interactant>
    <interactant intactId="EBI-6875961">
        <id>P02489</id>
        <label>CRYAA</label>
    </interactant>
    <organismsDiffer>false</organismsDiffer>
    <experiments>3</experiments>
</comment>
<comment type="interaction">
    <interactant intactId="EBI-2809187">
        <id>P35611</id>
    </interactant>
    <interactant intactId="EBI-1307">
        <id>Q13153</id>
        <label>PAK1</label>
    </interactant>
    <organismsDiffer>false</organismsDiffer>
    <experiments>3</experiments>
</comment>
<comment type="interaction">
    <interactant intactId="EBI-10206868">
        <id>P35611-5</id>
    </interactant>
    <interactant intactId="EBI-740641">
        <id>Q9NP66</id>
        <label>HMG20A</label>
    </interactant>
    <organismsDiffer>false</organismsDiffer>
    <experiments>3</experiments>
</comment>
<comment type="subcellular location">
    <subcellularLocation>
        <location>Cytoplasm</location>
        <location>Cytoskeleton</location>
    </subcellularLocation>
    <subcellularLocation>
        <location>Cell membrane</location>
        <topology>Peripheral membrane protein</topology>
        <orientation>Cytoplasmic side</orientation>
    </subcellularLocation>
</comment>
<comment type="alternative products">
    <event type="alternative splicing"/>
    <isoform>
        <id>P35611-1</id>
        <name>1</name>
        <sequence type="displayed"/>
    </isoform>
    <isoform>
        <id>P35611-2</id>
        <name>2</name>
        <sequence type="described" ref="VSP_000175 VSP_000176"/>
    </isoform>
    <isoform>
        <id>P35611-3</id>
        <name>3</name>
        <sequence type="described" ref="VSP_000174"/>
    </isoform>
    <isoform>
        <id>P35611-4</id>
        <name>4</name>
        <sequence type="described" ref="VSP_054420 VSP_000175 VSP_000176"/>
    </isoform>
    <isoform>
        <id>P35611-5</id>
        <name>5</name>
        <sequence type="described" ref="VSP_055402 VSP_055403"/>
    </isoform>
    <isoform>
        <id>P35611-6</id>
        <name>6</name>
        <sequence type="described" ref="VSP_000174 VSP_000175 VSP_000176"/>
    </isoform>
    <text>Additional isoforms seem to exist.</text>
</comment>
<comment type="tissue specificity">
    <text>Expressed in all tissues. Found in much higher levels in reticulocytes than the beta subunit.</text>
</comment>
<comment type="domain">
    <text>Each subunit is comprised of three regions: a NH2-terminal protease-resistant globular head region, a short connecting subdomain, and a protease-sensitive tail region.</text>
</comment>
<comment type="similarity">
    <text evidence="12">Belongs to the aldolase class II family. Adducin subfamily.</text>
</comment>
<comment type="sequence caution" evidence="12">
    <conflict type="erroneous gene model prediction">
        <sequence resource="EMBL-CDS" id="CAA98970"/>
    </conflict>
</comment>
<evidence type="ECO:0000250" key="1">
    <source>
        <dbReference type="UniProtKB" id="Q9QYC0"/>
    </source>
</evidence>
<evidence type="ECO:0000255" key="2"/>
<evidence type="ECO:0000256" key="3">
    <source>
        <dbReference type="SAM" id="MobiDB-lite"/>
    </source>
</evidence>
<evidence type="ECO:0000269" key="4">
    <source>
    </source>
</evidence>
<evidence type="ECO:0000269" key="5">
    <source>
    </source>
</evidence>
<evidence type="ECO:0000269" key="6">
    <source>
    </source>
</evidence>
<evidence type="ECO:0000269" key="7">
    <source>
    </source>
</evidence>
<evidence type="ECO:0000269" key="8">
    <source>
    </source>
</evidence>
<evidence type="ECO:0000303" key="9">
    <source>
    </source>
</evidence>
<evidence type="ECO:0000303" key="10">
    <source>
    </source>
</evidence>
<evidence type="ECO:0000303" key="11">
    <source>
    </source>
</evidence>
<evidence type="ECO:0000305" key="12"/>
<evidence type="ECO:0007744" key="13">
    <source>
    </source>
</evidence>
<evidence type="ECO:0007744" key="14">
    <source>
    </source>
</evidence>
<evidence type="ECO:0007744" key="15">
    <source>
    </source>
</evidence>
<evidence type="ECO:0007744" key="16">
    <source>
    </source>
</evidence>
<evidence type="ECO:0007744" key="17">
    <source>
    </source>
</evidence>
<evidence type="ECO:0007744" key="18">
    <source>
    </source>
</evidence>
<evidence type="ECO:0007744" key="19">
    <source>
    </source>
</evidence>
<evidence type="ECO:0007744" key="20">
    <source>
    </source>
</evidence>
<evidence type="ECO:0007744" key="21">
    <source>
    </source>
</evidence>
<name>ADDA_HUMAN</name>
<keyword id="KW-0007">Acetylation</keyword>
<keyword id="KW-0009">Actin-binding</keyword>
<keyword id="KW-0025">Alternative splicing</keyword>
<keyword id="KW-0112">Calmodulin-binding</keyword>
<keyword id="KW-1003">Cell membrane</keyword>
<keyword id="KW-0963">Cytoplasm</keyword>
<keyword id="KW-0206">Cytoskeleton</keyword>
<keyword id="KW-0903">Direct protein sequencing</keyword>
<keyword id="KW-0472">Membrane</keyword>
<keyword id="KW-0597">Phosphoprotein</keyword>
<keyword id="KW-1267">Proteomics identification</keyword>
<keyword id="KW-1185">Reference proteome</keyword>
<reference key="1">
    <citation type="journal article" date="1991" name="J. Cell Biol.">
        <title>Primary structure and domain organization of human alpha and beta adducin.</title>
        <authorList>
            <person name="Joshi R.L."/>
            <person name="Gilligan D.M."/>
            <person name="Otto E."/>
            <person name="McLaughlin T."/>
            <person name="Bennett V.D."/>
        </authorList>
    </citation>
    <scope>NUCLEOTIDE SEQUENCE [MRNA] (ISOFORM 1)</scope>
    <scope>PROTEIN SEQUENCE OF 24-36; 41-47; 516-569 AND 722-729</scope>
    <scope>VARIANT CYS-586</scope>
    <source>
        <tissue>Reticulocyte</tissue>
    </source>
</reference>
<reference key="2">
    <citation type="journal article" date="1992" name="Hum. Mol. Genet.">
        <title>Cloning and mapping of the alpha-adducin gene close to D4S95 and assessment of its relationship to Huntington disease.</title>
        <authorList>
            <person name="Goldberg Y.P."/>
            <person name="Lin B.Y."/>
            <person name="Andrew S.E."/>
            <person name="Nasir J."/>
            <person name="Graham R."/>
            <person name="Glaves M.L."/>
            <person name="Hutchinson G."/>
            <person name="Theilmann J."/>
            <person name="Ginzinger D.G."/>
            <person name="Schappert K."/>
        </authorList>
    </citation>
    <scope>NUCLEOTIDE SEQUENCE [MRNA] (ISOFORM 6)</scope>
</reference>
<reference key="3">
    <citation type="journal article" date="1995" name="Genomics">
        <title>Genomic organization of the human alpha-adducin gene and its alternately spliced isoforms.</title>
        <authorList>
            <person name="Lin B."/>
            <person name="Nasir J."/>
            <person name="McDonald H."/>
            <person name="Graham R."/>
            <person name="Rommens J.M."/>
            <person name="Goldberg Y.P."/>
            <person name="Hayden M.R."/>
        </authorList>
    </citation>
    <scope>NUCLEOTIDE SEQUENCE [GENOMIC DNA]</scope>
    <scope>ALTERNATIVE SPLICING</scope>
</reference>
<reference key="4">
    <citation type="journal article" date="2004" name="Nat. Genet.">
        <title>Complete sequencing and characterization of 21,243 full-length human cDNAs.</title>
        <authorList>
            <person name="Ota T."/>
            <person name="Suzuki Y."/>
            <person name="Nishikawa T."/>
            <person name="Otsuki T."/>
            <person name="Sugiyama T."/>
            <person name="Irie R."/>
            <person name="Wakamatsu A."/>
            <person name="Hayashi K."/>
            <person name="Sato H."/>
            <person name="Nagai K."/>
            <person name="Kimura K."/>
            <person name="Makita H."/>
            <person name="Sekine M."/>
            <person name="Obayashi M."/>
            <person name="Nishi T."/>
            <person name="Shibahara T."/>
            <person name="Tanaka T."/>
            <person name="Ishii S."/>
            <person name="Yamamoto J."/>
            <person name="Saito K."/>
            <person name="Kawai Y."/>
            <person name="Isono Y."/>
            <person name="Nakamura Y."/>
            <person name="Nagahari K."/>
            <person name="Murakami K."/>
            <person name="Yasuda T."/>
            <person name="Iwayanagi T."/>
            <person name="Wagatsuma M."/>
            <person name="Shiratori A."/>
            <person name="Sudo H."/>
            <person name="Hosoiri T."/>
            <person name="Kaku Y."/>
            <person name="Kodaira H."/>
            <person name="Kondo H."/>
            <person name="Sugawara M."/>
            <person name="Takahashi M."/>
            <person name="Kanda K."/>
            <person name="Yokoi T."/>
            <person name="Furuya T."/>
            <person name="Kikkawa E."/>
            <person name="Omura Y."/>
            <person name="Abe K."/>
            <person name="Kamihara K."/>
            <person name="Katsuta N."/>
            <person name="Sato K."/>
            <person name="Tanikawa M."/>
            <person name="Yamazaki M."/>
            <person name="Ninomiya K."/>
            <person name="Ishibashi T."/>
            <person name="Yamashita H."/>
            <person name="Murakawa K."/>
            <person name="Fujimori K."/>
            <person name="Tanai H."/>
            <person name="Kimata M."/>
            <person name="Watanabe M."/>
            <person name="Hiraoka S."/>
            <person name="Chiba Y."/>
            <person name="Ishida S."/>
            <person name="Ono Y."/>
            <person name="Takiguchi S."/>
            <person name="Watanabe S."/>
            <person name="Yosida M."/>
            <person name="Hotuta T."/>
            <person name="Kusano J."/>
            <person name="Kanehori K."/>
            <person name="Takahashi-Fujii A."/>
            <person name="Hara H."/>
            <person name="Tanase T.-O."/>
            <person name="Nomura Y."/>
            <person name="Togiya S."/>
            <person name="Komai F."/>
            <person name="Hara R."/>
            <person name="Takeuchi K."/>
            <person name="Arita M."/>
            <person name="Imose N."/>
            <person name="Musashino K."/>
            <person name="Yuuki H."/>
            <person name="Oshima A."/>
            <person name="Sasaki N."/>
            <person name="Aotsuka S."/>
            <person name="Yoshikawa Y."/>
            <person name="Matsunawa H."/>
            <person name="Ichihara T."/>
            <person name="Shiohata N."/>
            <person name="Sano S."/>
            <person name="Moriya S."/>
            <person name="Momiyama H."/>
            <person name="Satoh N."/>
            <person name="Takami S."/>
            <person name="Terashima Y."/>
            <person name="Suzuki O."/>
            <person name="Nakagawa S."/>
            <person name="Senoh A."/>
            <person name="Mizoguchi H."/>
            <person name="Goto Y."/>
            <person name="Shimizu F."/>
            <person name="Wakebe H."/>
            <person name="Hishigaki H."/>
            <person name="Watanabe T."/>
            <person name="Sugiyama A."/>
            <person name="Takemoto M."/>
            <person name="Kawakami B."/>
            <person name="Yamazaki M."/>
            <person name="Watanabe K."/>
            <person name="Kumagai A."/>
            <person name="Itakura S."/>
            <person name="Fukuzumi Y."/>
            <person name="Fujimori Y."/>
            <person name="Komiyama M."/>
            <person name="Tashiro H."/>
            <person name="Tanigami A."/>
            <person name="Fujiwara T."/>
            <person name="Ono T."/>
            <person name="Yamada K."/>
            <person name="Fujii Y."/>
            <person name="Ozaki K."/>
            <person name="Hirao M."/>
            <person name="Ohmori Y."/>
            <person name="Kawabata A."/>
            <person name="Hikiji T."/>
            <person name="Kobatake N."/>
            <person name="Inagaki H."/>
            <person name="Ikema Y."/>
            <person name="Okamoto S."/>
            <person name="Okitani R."/>
            <person name="Kawakami T."/>
            <person name="Noguchi S."/>
            <person name="Itoh T."/>
            <person name="Shigeta K."/>
            <person name="Senba T."/>
            <person name="Matsumura K."/>
            <person name="Nakajima Y."/>
            <person name="Mizuno T."/>
            <person name="Morinaga M."/>
            <person name="Sasaki M."/>
            <person name="Togashi T."/>
            <person name="Oyama M."/>
            <person name="Hata H."/>
            <person name="Watanabe M."/>
            <person name="Komatsu T."/>
            <person name="Mizushima-Sugano J."/>
            <person name="Satoh T."/>
            <person name="Shirai Y."/>
            <person name="Takahashi Y."/>
            <person name="Nakagawa K."/>
            <person name="Okumura K."/>
            <person name="Nagase T."/>
            <person name="Nomura N."/>
            <person name="Kikuchi H."/>
            <person name="Masuho Y."/>
            <person name="Yamashita R."/>
            <person name="Nakai K."/>
            <person name="Yada T."/>
            <person name="Nakamura Y."/>
            <person name="Ohara O."/>
            <person name="Isogai T."/>
            <person name="Sugano S."/>
        </authorList>
    </citation>
    <scope>NUCLEOTIDE SEQUENCE [LARGE SCALE MRNA] (ISOFORM 5)</scope>
    <source>
        <tissue>Hippocampus</tissue>
    </source>
</reference>
<reference key="5">
    <citation type="journal article" date="2005" name="Nature">
        <title>Generation and annotation of the DNA sequences of human chromosomes 2 and 4.</title>
        <authorList>
            <person name="Hillier L.W."/>
            <person name="Graves T.A."/>
            <person name="Fulton R.S."/>
            <person name="Fulton L.A."/>
            <person name="Pepin K.H."/>
            <person name="Minx P."/>
            <person name="Wagner-McPherson C."/>
            <person name="Layman D."/>
            <person name="Wylie K."/>
            <person name="Sekhon M."/>
            <person name="Becker M.C."/>
            <person name="Fewell G.A."/>
            <person name="Delehaunty K.D."/>
            <person name="Miner T.L."/>
            <person name="Nash W.E."/>
            <person name="Kremitzki C."/>
            <person name="Oddy L."/>
            <person name="Du H."/>
            <person name="Sun H."/>
            <person name="Bradshaw-Cordum H."/>
            <person name="Ali J."/>
            <person name="Carter J."/>
            <person name="Cordes M."/>
            <person name="Harris A."/>
            <person name="Isak A."/>
            <person name="van Brunt A."/>
            <person name="Nguyen C."/>
            <person name="Du F."/>
            <person name="Courtney L."/>
            <person name="Kalicki J."/>
            <person name="Ozersky P."/>
            <person name="Abbott S."/>
            <person name="Armstrong J."/>
            <person name="Belter E.A."/>
            <person name="Caruso L."/>
            <person name="Cedroni M."/>
            <person name="Cotton M."/>
            <person name="Davidson T."/>
            <person name="Desai A."/>
            <person name="Elliott G."/>
            <person name="Erb T."/>
            <person name="Fronick C."/>
            <person name="Gaige T."/>
            <person name="Haakenson W."/>
            <person name="Haglund K."/>
            <person name="Holmes A."/>
            <person name="Harkins R."/>
            <person name="Kim K."/>
            <person name="Kruchowski S.S."/>
            <person name="Strong C.M."/>
            <person name="Grewal N."/>
            <person name="Goyea E."/>
            <person name="Hou S."/>
            <person name="Levy A."/>
            <person name="Martinka S."/>
            <person name="Mead K."/>
            <person name="McLellan M.D."/>
            <person name="Meyer R."/>
            <person name="Randall-Maher J."/>
            <person name="Tomlinson C."/>
            <person name="Dauphin-Kohlberg S."/>
            <person name="Kozlowicz-Reilly A."/>
            <person name="Shah N."/>
            <person name="Swearengen-Shahid S."/>
            <person name="Snider J."/>
            <person name="Strong J.T."/>
            <person name="Thompson J."/>
            <person name="Yoakum M."/>
            <person name="Leonard S."/>
            <person name="Pearman C."/>
            <person name="Trani L."/>
            <person name="Radionenko M."/>
            <person name="Waligorski J.E."/>
            <person name="Wang C."/>
            <person name="Rock S.M."/>
            <person name="Tin-Wollam A.-M."/>
            <person name="Maupin R."/>
            <person name="Latreille P."/>
            <person name="Wendl M.C."/>
            <person name="Yang S.-P."/>
            <person name="Pohl C."/>
            <person name="Wallis J.W."/>
            <person name="Spieth J."/>
            <person name="Bieri T.A."/>
            <person name="Berkowicz N."/>
            <person name="Nelson J.O."/>
            <person name="Osborne J."/>
            <person name="Ding L."/>
            <person name="Meyer R."/>
            <person name="Sabo A."/>
            <person name="Shotland Y."/>
            <person name="Sinha P."/>
            <person name="Wohldmann P.E."/>
            <person name="Cook L.L."/>
            <person name="Hickenbotham M.T."/>
            <person name="Eldred J."/>
            <person name="Williams D."/>
            <person name="Jones T.A."/>
            <person name="She X."/>
            <person name="Ciccarelli F.D."/>
            <person name="Izaurralde E."/>
            <person name="Taylor J."/>
            <person name="Schmutz J."/>
            <person name="Myers R.M."/>
            <person name="Cox D.R."/>
            <person name="Huang X."/>
            <person name="McPherson J.D."/>
            <person name="Mardis E.R."/>
            <person name="Clifton S.W."/>
            <person name="Warren W.C."/>
            <person name="Chinwalla A.T."/>
            <person name="Eddy S.R."/>
            <person name="Marra M.A."/>
            <person name="Ovcharenko I."/>
            <person name="Furey T.S."/>
            <person name="Miller W."/>
            <person name="Eichler E.E."/>
            <person name="Bork P."/>
            <person name="Suyama M."/>
            <person name="Torrents D."/>
            <person name="Waterston R.H."/>
            <person name="Wilson R.K."/>
        </authorList>
    </citation>
    <scope>NUCLEOTIDE SEQUENCE [LARGE SCALE GENOMIC DNA]</scope>
</reference>
<reference key="6">
    <citation type="submission" date="2005-09" db="EMBL/GenBank/DDBJ databases">
        <authorList>
            <person name="Mural R.J."/>
            <person name="Istrail S."/>
            <person name="Sutton G.G."/>
            <person name="Florea L."/>
            <person name="Halpern A.L."/>
            <person name="Mobarry C.M."/>
            <person name="Lippert R."/>
            <person name="Walenz B."/>
            <person name="Shatkay H."/>
            <person name="Dew I."/>
            <person name="Miller J.R."/>
            <person name="Flanigan M.J."/>
            <person name="Edwards N.J."/>
            <person name="Bolanos R."/>
            <person name="Fasulo D."/>
            <person name="Halldorsson B.V."/>
            <person name="Hannenhalli S."/>
            <person name="Turner R."/>
            <person name="Yooseph S."/>
            <person name="Lu F."/>
            <person name="Nusskern D.R."/>
            <person name="Shue B.C."/>
            <person name="Zheng X.H."/>
            <person name="Zhong F."/>
            <person name="Delcher A.L."/>
            <person name="Huson D.H."/>
            <person name="Kravitz S.A."/>
            <person name="Mouchard L."/>
            <person name="Reinert K."/>
            <person name="Remington K.A."/>
            <person name="Clark A.G."/>
            <person name="Waterman M.S."/>
            <person name="Eichler E.E."/>
            <person name="Adams M.D."/>
            <person name="Hunkapiller M.W."/>
            <person name="Myers E.W."/>
            <person name="Venter J.C."/>
        </authorList>
    </citation>
    <scope>NUCLEOTIDE SEQUENCE [LARGE SCALE GENOMIC DNA]</scope>
</reference>
<reference key="7">
    <citation type="journal article" date="2004" name="Genome Res.">
        <title>The status, quality, and expansion of the NIH full-length cDNA project: the Mammalian Gene Collection (MGC).</title>
        <authorList>
            <consortium name="The MGC Project Team"/>
        </authorList>
    </citation>
    <scope>NUCLEOTIDE SEQUENCE [LARGE SCALE MRNA] (ISOFORM 4)</scope>
    <source>
        <tissue>Testis</tissue>
    </source>
</reference>
<reference key="8">
    <citation type="journal article" date="1992" name="Nat. Genet.">
        <title>Cloning of the alpha-adducin gene from the Huntington's disease candidate region of chromosome 4 by exon amplification.</title>
        <authorList>
            <person name="Taylor S.A."/>
            <person name="Snell R.G."/>
            <person name="Buckler A."/>
            <person name="Ambrose C."/>
            <person name="Duyao M."/>
            <person name="Church D."/>
            <person name="Lin C.S."/>
            <person name="Altherr M."/>
            <person name="Bates G.P."/>
            <person name="Groot N."/>
        </authorList>
    </citation>
    <scope>NUCLEOTIDE SEQUENCE [MRNA] OF 531-737 (ISOFORMS 1/3)</scope>
</reference>
<reference key="9">
    <citation type="journal article" date="1996" name="J. Biol. Chem.">
        <title>Adducin regulation. Definition of the calmodulin-binding domain and sites of phosphorylation by protein kinases A and C.</title>
        <authorList>
            <person name="Matsuoka Y."/>
            <person name="Hughes C.A."/>
            <person name="Bennett V."/>
        </authorList>
    </citation>
    <scope>PHOSPHORYLATION AT SER-59; SER-408; SER-436; SER-481; SER-716 AND SER-726</scope>
    <scope>PARTIAL PROTEIN SEQUENCE</scope>
</reference>
<reference key="10">
    <citation type="journal article" date="1999" name="J. Cell Biol.">
        <title>Phosphorylation of adducin by Rho-kinase plays a crucial role in cell motility.</title>
        <authorList>
            <person name="Fukata Y."/>
            <person name="Oshiro N."/>
            <person name="Kinoshita N."/>
            <person name="Kawano Y."/>
            <person name="Matsuoka Y."/>
            <person name="Bennett V."/>
            <person name="Matsuura Y."/>
            <person name="Kaibuchi K."/>
        </authorList>
    </citation>
    <scope>PHOSPHORYLATION AT THR-445 AND THR-480</scope>
    <scope>MUTAGENESIS OF THR-445 AND THR-480</scope>
</reference>
<reference key="11">
    <citation type="journal article" date="2006" name="Cell">
        <title>Global, in vivo, and site-specific phosphorylation dynamics in signaling networks.</title>
        <authorList>
            <person name="Olsen J.V."/>
            <person name="Blagoev B."/>
            <person name="Gnad F."/>
            <person name="Macek B."/>
            <person name="Kumar C."/>
            <person name="Mortensen P."/>
            <person name="Mann M."/>
        </authorList>
    </citation>
    <scope>PHOSPHORYLATION [LARGE SCALE ANALYSIS] AT SER-707 AND SER-710</scope>
    <scope>IDENTIFICATION BY MASS SPECTROMETRY [LARGE SCALE ANALYSIS]</scope>
    <source>
        <tissue>Cervix carcinoma</tissue>
    </source>
</reference>
<reference key="12">
    <citation type="journal article" date="2008" name="J. Proteome Res.">
        <title>Phosphoproteome of resting human platelets.</title>
        <authorList>
            <person name="Zahedi R.P."/>
            <person name="Lewandrowski U."/>
            <person name="Wiesner J."/>
            <person name="Wortelkamp S."/>
            <person name="Moebius J."/>
            <person name="Schuetz C."/>
            <person name="Walter U."/>
            <person name="Gambaryan S."/>
            <person name="Sickmann A."/>
        </authorList>
    </citation>
    <scope>PHOSPHORYLATION [LARGE SCALE ANALYSIS] AT SER-358</scope>
    <scope>IDENTIFICATION BY MASS SPECTROMETRY [LARGE SCALE ANALYSIS]</scope>
    <source>
        <tissue>Platelet</tissue>
    </source>
</reference>
<reference key="13">
    <citation type="journal article" date="2008" name="Proc. Natl. Acad. Sci. U.S.A.">
        <title>A quantitative atlas of mitotic phosphorylation.</title>
        <authorList>
            <person name="Dephoure N."/>
            <person name="Zhou C."/>
            <person name="Villen J."/>
            <person name="Beausoleil S.A."/>
            <person name="Bakalarski C.E."/>
            <person name="Elledge S.J."/>
            <person name="Gygi S.P."/>
        </authorList>
    </citation>
    <scope>PHOSPHORYLATION [LARGE SCALE ANALYSIS] AT SER-12; THR-331; SER-334; SER-358; SER-431; SER-436 AND SER-465</scope>
    <scope>IDENTIFICATION BY MASS SPECTROMETRY [LARGE SCALE ANALYSIS]</scope>
    <source>
        <tissue>Cervix carcinoma</tissue>
    </source>
</reference>
<reference key="14">
    <citation type="journal article" date="2009" name="Anal. Chem.">
        <title>Lys-N and trypsin cover complementary parts of the phosphoproteome in a refined SCX-based approach.</title>
        <authorList>
            <person name="Gauci S."/>
            <person name="Helbig A.O."/>
            <person name="Slijper M."/>
            <person name="Krijgsveld J."/>
            <person name="Heck A.J."/>
            <person name="Mohammed S."/>
        </authorList>
    </citation>
    <scope>ACETYLATION [LARGE SCALE ANALYSIS] AT MET-1</scope>
    <scope>IDENTIFICATION BY MASS SPECTROMETRY [LARGE SCALE ANALYSIS]</scope>
</reference>
<reference key="15">
    <citation type="journal article" date="2009" name="Sci. Signal.">
        <title>Quantitative phosphoproteomic analysis of T cell receptor signaling reveals system-wide modulation of protein-protein interactions.</title>
        <authorList>
            <person name="Mayya V."/>
            <person name="Lundgren D.H."/>
            <person name="Hwang S.-I."/>
            <person name="Rezaul K."/>
            <person name="Wu L."/>
            <person name="Eng J.K."/>
            <person name="Rodionov V."/>
            <person name="Han D.K."/>
        </authorList>
    </citation>
    <scope>PHOSPHORYLATION [LARGE SCALE ANALYSIS] AT SER-465</scope>
    <scope>IDENTIFICATION BY MASS SPECTROMETRY [LARGE SCALE ANALYSIS]</scope>
    <source>
        <tissue>Leukemic T-cell</tissue>
    </source>
</reference>
<reference key="16">
    <citation type="journal article" date="2010" name="Sci. Signal.">
        <title>Quantitative phosphoproteomics reveals widespread full phosphorylation site occupancy during mitosis.</title>
        <authorList>
            <person name="Olsen J.V."/>
            <person name="Vermeulen M."/>
            <person name="Santamaria A."/>
            <person name="Kumar C."/>
            <person name="Miller M.L."/>
            <person name="Jensen L.J."/>
            <person name="Gnad F."/>
            <person name="Cox J."/>
            <person name="Jensen T.S."/>
            <person name="Nigg E.A."/>
            <person name="Brunak S."/>
            <person name="Mann M."/>
        </authorList>
    </citation>
    <scope>PHOSPHORYLATION [LARGE SCALE ANALYSIS] AT SER-465</scope>
    <scope>IDENTIFICATION BY MASS SPECTROMETRY [LARGE SCALE ANALYSIS]</scope>
    <source>
        <tissue>Cervix carcinoma</tissue>
    </source>
</reference>
<reference key="17">
    <citation type="journal article" date="2011" name="BMC Syst. Biol.">
        <title>Initial characterization of the human central proteome.</title>
        <authorList>
            <person name="Burkard T.R."/>
            <person name="Planyavsky M."/>
            <person name="Kaupe I."/>
            <person name="Breitwieser F.P."/>
            <person name="Buerckstuemmer T."/>
            <person name="Bennett K.L."/>
            <person name="Superti-Furga G."/>
            <person name="Colinge J."/>
        </authorList>
    </citation>
    <scope>IDENTIFICATION BY MASS SPECTROMETRY [LARGE SCALE ANALYSIS]</scope>
</reference>
<reference key="18">
    <citation type="journal article" date="2011" name="Sci. Signal.">
        <title>System-wide temporal characterization of the proteome and phosphoproteome of human embryonic stem cell differentiation.</title>
        <authorList>
            <person name="Rigbolt K.T."/>
            <person name="Prokhorova T.A."/>
            <person name="Akimov V."/>
            <person name="Henningsen J."/>
            <person name="Johansen P.T."/>
            <person name="Kratchmarova I."/>
            <person name="Kassem M."/>
            <person name="Mann M."/>
            <person name="Olsen J.V."/>
            <person name="Blagoev B."/>
        </authorList>
    </citation>
    <scope>PHOSPHORYLATION [LARGE SCALE ANALYSIS] AT SER-12; SER-358; SER-465; SER-707; SER-710 AND SER-714</scope>
    <scope>IDENTIFICATION BY MASS SPECTROMETRY [LARGE SCALE ANALYSIS]</scope>
</reference>
<reference key="19">
    <citation type="journal article" date="2013" name="J. Proteome Res.">
        <title>Toward a comprehensive characterization of a human cancer cell phosphoproteome.</title>
        <authorList>
            <person name="Zhou H."/>
            <person name="Di Palma S."/>
            <person name="Preisinger C."/>
            <person name="Peng M."/>
            <person name="Polat A.N."/>
            <person name="Heck A.J."/>
            <person name="Mohammed S."/>
        </authorList>
    </citation>
    <scope>PHOSPHORYLATION [LARGE SCALE ANALYSIS] AT SER-12; SER-353; SER-355; SER-358; SER-366; SER-431 AND SER-465</scope>
    <scope>IDENTIFICATION BY MASS SPECTROMETRY [LARGE SCALE ANALYSIS]</scope>
    <source>
        <tissue>Cervix carcinoma</tissue>
        <tissue>Erythroleukemia</tissue>
    </source>
</reference>
<reference key="20">
    <citation type="journal article" date="2014" name="J. Proteomics">
        <title>An enzyme assisted RP-RPLC approach for in-depth analysis of human liver phosphoproteome.</title>
        <authorList>
            <person name="Bian Y."/>
            <person name="Song C."/>
            <person name="Cheng K."/>
            <person name="Dong M."/>
            <person name="Wang F."/>
            <person name="Huang J."/>
            <person name="Sun D."/>
            <person name="Wang L."/>
            <person name="Ye M."/>
            <person name="Zou H."/>
        </authorList>
    </citation>
    <scope>PHOSPHORYLATION [LARGE SCALE ANALYSIS] AT SER-59; SER-64; SER-358; SER-678; SER-707 AND SER-716</scope>
    <scope>IDENTIFICATION BY MASS SPECTROMETRY [LARGE SCALE ANALYSIS]</scope>
    <source>
        <tissue>Liver</tissue>
    </source>
</reference>
<reference key="21">
    <citation type="journal article" date="2015" name="Proteomics">
        <title>N-terminome analysis of the human mitochondrial proteome.</title>
        <authorList>
            <person name="Vaca Jacome A.S."/>
            <person name="Rabilloud T."/>
            <person name="Schaeffer-Reiss C."/>
            <person name="Rompais M."/>
            <person name="Ayoub D."/>
            <person name="Lane L."/>
            <person name="Bairoch A."/>
            <person name="Van Dorsselaer A."/>
            <person name="Carapito C."/>
        </authorList>
    </citation>
    <scope>IDENTIFICATION BY MASS SPECTROMETRY [LARGE SCALE ANALYSIS]</scope>
</reference>
<reference key="22">
    <citation type="journal article" date="1998" name="Hypertension">
        <title>Human alpha-adducin gene, blood pressure, and sodium metabolism.</title>
        <authorList>
            <person name="Kamitani A."/>
            <person name="Wong Z.Y."/>
            <person name="Fraser R."/>
            <person name="Davies D.L."/>
            <person name="Connor J.M."/>
            <person name="Foy C.J."/>
            <person name="Watt G.C."/>
            <person name="Harrap S.B."/>
        </authorList>
    </citation>
    <scope>VARIANT TRP-460</scope>
</reference>
<reference key="23">
    <citation type="journal article" date="1999" name="Nat. Genet.">
        <title>Patterns of single-nucleotide polymorphisms in candidate genes for blood-pressure homeostasis.</title>
        <authorList>
            <person name="Halushka M.K."/>
            <person name="Fan J.-B."/>
            <person name="Bentley K."/>
            <person name="Hsie L."/>
            <person name="Shen N."/>
            <person name="Weder A."/>
            <person name="Cooper R."/>
            <person name="Lipshutz R."/>
            <person name="Chakravarti A."/>
        </authorList>
    </citation>
    <scope>VARIANTS TRP-460 AND CYS-586</scope>
</reference>
<organism>
    <name type="scientific">Homo sapiens</name>
    <name type="common">Human</name>
    <dbReference type="NCBI Taxonomy" id="9606"/>
    <lineage>
        <taxon>Eukaryota</taxon>
        <taxon>Metazoa</taxon>
        <taxon>Chordata</taxon>
        <taxon>Craniata</taxon>
        <taxon>Vertebrata</taxon>
        <taxon>Euteleostomi</taxon>
        <taxon>Mammalia</taxon>
        <taxon>Eutheria</taxon>
        <taxon>Euarchontoglires</taxon>
        <taxon>Primates</taxon>
        <taxon>Haplorrhini</taxon>
        <taxon>Catarrhini</taxon>
        <taxon>Hominidae</taxon>
        <taxon>Homo</taxon>
    </lineage>
</organism>
<sequence length="737" mass="80955">MNGDSRAAVVTSPPPTTAPHKERYFDRVDENNPEYLRERNMAPDLRQDFNMMEQKKRVSMILQSPAFCEELESMIQEQFKKGKNPTGLLALQQIADFMTTNVPNVYPAAPQGGMAALNMSLGMVTPVNDLRGSDSIAYDKGEKLLRCKLAAFYRLADLFGWSQLIYNHITTRVNSEQEHFLIVPFGLLYSEVTASSLVKINLQGDIVDRGSTNLGVNQAGFTLHSAIYAARPDVKCVVHIHTPAGAAVSAMKCGLLPISPEALSLGEVAYHDYHGILVDEEEKVLIQKNLGPKSKVLILRNHGLVSVGESVEEAFYYIHNLVVACEIQVRTLASAGGPDNLVLLNPEKYKAKSRSPGSPVGEGTGSPPKWQIGEQEFEALMRMLDNLGYRTGYPYRYPALREKSKKYSDVEVPASVTGYSFASDGDSGTCSPLRHSFQKQQREKTRWLNSGRGDEASEEGQNGSSPKSKTKWTKEDGHRTSTSAVPNLFVPLNTNPKEVQEMRNKIREQNLQDIKTAGPQSQVLCGVVMDRSLVQGELVTASKAIIEKEYQPHVIVSTTGPNPFTTLTDRELEEYRREVERKQKGSEENLDEAREQKEKSPPDQPAVPHPPPSTPIKLEEDLVPEPTTGDDSDAATFKPTLPDLSPDEPSEALGFPMLEKEEEAHRPPSPTEAPTEASPEPAPDPAPVAEEAAPSAVEEGAAADPGSDGSPGKSPSKKKKKFRTPSFLKKSKKKSDS</sequence>
<accession>P35611</accession>
<accession>A2A3N8</accession>
<accession>A2A3P0</accession>
<accession>B4DI79</accession>
<accession>D3DVR3</accession>
<accession>D3DVR4</accession>
<accession>D3DVR5</accession>
<accession>Q13734</accession>
<accession>Q14729</accession>
<accession>Q16156</accession>
<accession>Q86XM2</accession>
<accession>Q9UJB6</accession>
<feature type="chain" id="PRO_0000218530" description="Alpha-adducin">
    <location>
        <begin position="1"/>
        <end position="737"/>
    </location>
</feature>
<feature type="region of interest" description="Disordered" evidence="3">
    <location>
        <begin position="1"/>
        <end position="21"/>
    </location>
</feature>
<feature type="region of interest" description="Disordered" evidence="3">
    <location>
        <begin position="421"/>
        <end position="486"/>
    </location>
</feature>
<feature type="region of interest" description="Disordered" evidence="3">
    <location>
        <begin position="576"/>
        <end position="737"/>
    </location>
</feature>
<feature type="region of interest" description="Interaction with calmodulin" evidence="2">
    <location>
        <begin position="717"/>
        <end position="734"/>
    </location>
</feature>
<feature type="compositionally biased region" description="Basic and acidic residues" evidence="3">
    <location>
        <begin position="576"/>
        <end position="601"/>
    </location>
</feature>
<feature type="compositionally biased region" description="Pro residues" evidence="3">
    <location>
        <begin position="602"/>
        <end position="614"/>
    </location>
</feature>
<feature type="compositionally biased region" description="Low complexity" evidence="3">
    <location>
        <begin position="687"/>
        <end position="714"/>
    </location>
</feature>
<feature type="compositionally biased region" description="Basic residues" evidence="3">
    <location>
        <begin position="715"/>
        <end position="737"/>
    </location>
</feature>
<feature type="modified residue" description="N-acetylmethionine" evidence="16">
    <location>
        <position position="1"/>
    </location>
</feature>
<feature type="modified residue" description="Phosphoserine" evidence="15 19 20">
    <location>
        <position position="12"/>
    </location>
</feature>
<feature type="modified residue" description="Phosphoserine; by PKA" evidence="7 21">
    <location>
        <position position="59"/>
    </location>
</feature>
<feature type="modified residue" description="Phosphoserine" evidence="21">
    <location>
        <position position="64"/>
    </location>
</feature>
<feature type="modified residue" description="Phosphothreonine" evidence="15">
    <location>
        <position position="331"/>
    </location>
</feature>
<feature type="modified residue" description="Phosphoserine" evidence="15">
    <location>
        <position position="334"/>
    </location>
</feature>
<feature type="modified residue" description="Phosphoserine" evidence="20">
    <location>
        <position position="353"/>
    </location>
</feature>
<feature type="modified residue" description="Phosphoserine" evidence="20">
    <location>
        <position position="355"/>
    </location>
</feature>
<feature type="modified residue" description="Phosphoserine" evidence="14 15 19 20 21">
    <location>
        <position position="358"/>
    </location>
</feature>
<feature type="modified residue" description="Phosphoserine" evidence="20">
    <location>
        <position position="366"/>
    </location>
</feature>
<feature type="modified residue" description="Phosphoserine; by PKA" evidence="7">
    <location>
        <position position="408"/>
    </location>
</feature>
<feature type="modified residue" description="Phosphoserine" evidence="1">
    <location>
        <position position="427"/>
    </location>
</feature>
<feature type="modified residue" description="Phosphothreonine" evidence="1">
    <location>
        <position position="429"/>
    </location>
</feature>
<feature type="modified residue" description="Phosphoserine" evidence="15 20">
    <location>
        <position position="431"/>
    </location>
</feature>
<feature type="modified residue" description="Phosphoserine; by PKA" evidence="7 15">
    <location>
        <position position="436"/>
    </location>
</feature>
<feature type="modified residue" description="Phosphothreonine; by ROCK2" evidence="4">
    <location>
        <position position="445"/>
    </location>
</feature>
<feature type="modified residue" description="Phosphoserine" evidence="1">
    <location>
        <position position="464"/>
    </location>
</feature>
<feature type="modified residue" description="Phosphoserine" evidence="15 17 18 19 20">
    <location>
        <position position="465"/>
    </location>
</feature>
<feature type="modified residue" description="Phosphothreonine; by ROCK2" evidence="4">
    <location>
        <position position="480"/>
    </location>
</feature>
<feature type="modified residue" description="Phosphoserine; by PKA" evidence="7">
    <location>
        <position position="481"/>
    </location>
</feature>
<feature type="modified residue" description="Phosphoserine" evidence="1">
    <location>
        <position position="586"/>
    </location>
</feature>
<feature type="modified residue" description="Phosphoserine" evidence="1">
    <location>
        <position position="600"/>
    </location>
</feature>
<feature type="modified residue" description="Phosphoserine" evidence="1">
    <location>
        <position position="613"/>
    </location>
</feature>
<feature type="modified residue" description="Phosphothreonine" evidence="1">
    <location>
        <position position="614"/>
    </location>
</feature>
<feature type="modified residue" description="Phosphoserine" evidence="21">
    <location>
        <position position="678"/>
    </location>
</feature>
<feature type="modified residue" description="Phosphoserine" evidence="13 19 21">
    <location>
        <position position="707"/>
    </location>
</feature>
<feature type="modified residue" description="Phosphoserine" evidence="13 19">
    <location>
        <position position="710"/>
    </location>
</feature>
<feature type="modified residue" description="Phosphoserine" evidence="19">
    <location>
        <position position="714"/>
    </location>
</feature>
<feature type="modified residue" description="Phosphoserine; by PKC" evidence="7 21">
    <location>
        <position position="716"/>
    </location>
</feature>
<feature type="modified residue" description="Phosphoserine; by PKA and PKC" evidence="7">
    <location>
        <position position="726"/>
    </location>
</feature>
<feature type="splice variant" id="VSP_000174" description="In isoform 3 and isoform 6." evidence="9">
    <original>K</original>
    <variation>KVWTNITHDHVKPLLQSLSSGVCVPSCITNCL</variation>
    <location>
        <position position="471"/>
    </location>
</feature>
<feature type="splice variant" id="VSP_055402" description="In isoform 5." evidence="10">
    <original>WTKEDGHRTSTSAVPNLFVPLNTNPKEVQEMRNKIREQNL</original>
    <variation>VWTNITHDHVKPLLQSLSSGVCVPSCITNCLVCAYLTVHS</variation>
    <location>
        <begin position="472"/>
        <end position="511"/>
    </location>
</feature>
<feature type="splice variant" id="VSP_055403" description="In isoform 5." evidence="10">
    <location>
        <begin position="512"/>
        <end position="737"/>
    </location>
</feature>
<feature type="splice variant" id="VSP_054420" description="In isoform 4." evidence="11">
    <original>Q</original>
    <variation>QDAPLSDCTETIEGLELTEQTFSPAKSLSFRK</variation>
    <location>
        <position position="535"/>
    </location>
</feature>
<feature type="splice variant" id="VSP_000175" description="In isoform 2, isoform 4 and isoform 6." evidence="9 11">
    <original>DLVPEPTTGDD</original>
    <variation>GDGCAREYLLP</variation>
    <location>
        <begin position="621"/>
        <end position="631"/>
    </location>
</feature>
<feature type="splice variant" id="VSP_000176" description="In isoform 2, isoform 4 and isoform 6." evidence="9 11">
    <location>
        <begin position="632"/>
        <end position="737"/>
    </location>
</feature>
<feature type="sequence variant" id="VAR_022108" description="In dbSNP:rs2295497.">
    <original>R</original>
    <variation>C</variation>
    <location>
        <position position="6"/>
    </location>
</feature>
<feature type="sequence variant" id="VAR_014863" description="In dbSNP:rs4971.">
    <original>Y</original>
    <variation>N</variation>
    <location>
        <position position="270"/>
    </location>
</feature>
<feature type="sequence variant" id="VAR_014864" description="In dbSNP:rs4972.">
    <original>E</original>
    <variation>D</variation>
    <location>
        <position position="376"/>
    </location>
</feature>
<feature type="sequence variant" id="VAR_014184" description="In dbSNP:rs4961." evidence="5 8">
    <original>G</original>
    <variation>W</variation>
    <location>
        <position position="460"/>
    </location>
</feature>
<feature type="sequence variant" id="VAR_014865" description="In dbSNP:rs4962.">
    <original>N</original>
    <variation>I</variation>
    <location>
        <position position="510"/>
    </location>
</feature>
<feature type="sequence variant" id="VAR_014185" description="In dbSNP:rs4963." evidence="5 6">
    <original>S</original>
    <variation>C</variation>
    <location>
        <position position="586"/>
    </location>
</feature>
<feature type="mutagenesis site" description="Abolishes phosphorylation by ROCK2; when associated with D-480." evidence="4">
    <original>T</original>
    <variation>D</variation>
    <location>
        <position position="445"/>
    </location>
</feature>
<feature type="mutagenesis site" description="Abolishes phosphorylation by ROCK2; when associated with D-445." evidence="4">
    <original>T</original>
    <variation>D</variation>
    <location>
        <position position="480"/>
    </location>
</feature>
<feature type="sequence conflict" description="In Ref. 3; AAB05645." evidence="12" ref="3">
    <original>A</original>
    <variation>E</variation>
    <location>
        <position position="606"/>
    </location>
</feature>